<evidence type="ECO:0000255" key="1">
    <source>
        <dbReference type="HAMAP-Rule" id="MF_00388"/>
    </source>
</evidence>
<gene>
    <name evidence="1" type="primary">lpxC</name>
    <name type="ordered locus">CJA_2921</name>
</gene>
<protein>
    <recommendedName>
        <fullName evidence="1">UDP-3-O-acyl-N-acetylglucosamine deacetylase</fullName>
        <shortName evidence="1">UDP-3-O-acyl-GlcNAc deacetylase</shortName>
        <ecNumber evidence="1">3.5.1.108</ecNumber>
    </recommendedName>
    <alternativeName>
        <fullName evidence="1">UDP-3-O-[R-3-hydroxymyristoyl]-N-acetylglucosamine deacetylase</fullName>
    </alternativeName>
</protein>
<organism>
    <name type="scientific">Cellvibrio japonicus (strain Ueda107)</name>
    <name type="common">Pseudomonas fluorescens subsp. cellulosa</name>
    <dbReference type="NCBI Taxonomy" id="498211"/>
    <lineage>
        <taxon>Bacteria</taxon>
        <taxon>Pseudomonadati</taxon>
        <taxon>Pseudomonadota</taxon>
        <taxon>Gammaproteobacteria</taxon>
        <taxon>Cellvibrionales</taxon>
        <taxon>Cellvibrionaceae</taxon>
        <taxon>Cellvibrio</taxon>
    </lineage>
</organism>
<dbReference type="EC" id="3.5.1.108" evidence="1"/>
<dbReference type="EMBL" id="CP000934">
    <property type="protein sequence ID" value="ACE85301.1"/>
    <property type="molecule type" value="Genomic_DNA"/>
</dbReference>
<dbReference type="RefSeq" id="WP_012488505.1">
    <property type="nucleotide sequence ID" value="NC_010995.1"/>
</dbReference>
<dbReference type="SMR" id="B3PCL2"/>
<dbReference type="STRING" id="498211.CJA_2921"/>
<dbReference type="KEGG" id="cja:CJA_2921"/>
<dbReference type="eggNOG" id="COG0774">
    <property type="taxonomic scope" value="Bacteria"/>
</dbReference>
<dbReference type="HOGENOM" id="CLU_046528_1_0_6"/>
<dbReference type="OrthoDB" id="9802746at2"/>
<dbReference type="UniPathway" id="UPA00359">
    <property type="reaction ID" value="UER00478"/>
</dbReference>
<dbReference type="Proteomes" id="UP000001036">
    <property type="component" value="Chromosome"/>
</dbReference>
<dbReference type="GO" id="GO:0016020">
    <property type="term" value="C:membrane"/>
    <property type="evidence" value="ECO:0007669"/>
    <property type="project" value="GOC"/>
</dbReference>
<dbReference type="GO" id="GO:0046872">
    <property type="term" value="F:metal ion binding"/>
    <property type="evidence" value="ECO:0007669"/>
    <property type="project" value="UniProtKB-KW"/>
</dbReference>
<dbReference type="GO" id="GO:0103117">
    <property type="term" value="F:UDP-3-O-acyl-N-acetylglucosamine deacetylase activity"/>
    <property type="evidence" value="ECO:0007669"/>
    <property type="project" value="UniProtKB-UniRule"/>
</dbReference>
<dbReference type="GO" id="GO:0009245">
    <property type="term" value="P:lipid A biosynthetic process"/>
    <property type="evidence" value="ECO:0007669"/>
    <property type="project" value="UniProtKB-UniRule"/>
</dbReference>
<dbReference type="Gene3D" id="3.30.230.20">
    <property type="entry name" value="lpxc deacetylase, domain 1"/>
    <property type="match status" value="1"/>
</dbReference>
<dbReference type="Gene3D" id="3.30.1700.10">
    <property type="entry name" value="lpxc deacetylase, domain 2"/>
    <property type="match status" value="1"/>
</dbReference>
<dbReference type="HAMAP" id="MF_00388">
    <property type="entry name" value="LpxC"/>
    <property type="match status" value="1"/>
</dbReference>
<dbReference type="InterPro" id="IPR020568">
    <property type="entry name" value="Ribosomal_Su5_D2-typ_SF"/>
</dbReference>
<dbReference type="InterPro" id="IPR004463">
    <property type="entry name" value="UDP-acyl_GlcNac_deAcase"/>
</dbReference>
<dbReference type="InterPro" id="IPR011334">
    <property type="entry name" value="UDP-acyl_GlcNac_deAcase_C"/>
</dbReference>
<dbReference type="InterPro" id="IPR015870">
    <property type="entry name" value="UDP-acyl_N-AcGlcN_deAcase_N"/>
</dbReference>
<dbReference type="NCBIfam" id="TIGR00325">
    <property type="entry name" value="lpxC"/>
    <property type="match status" value="1"/>
</dbReference>
<dbReference type="PANTHER" id="PTHR33694">
    <property type="entry name" value="UDP-3-O-ACYL-N-ACETYLGLUCOSAMINE DEACETYLASE 1, MITOCHONDRIAL-RELATED"/>
    <property type="match status" value="1"/>
</dbReference>
<dbReference type="PANTHER" id="PTHR33694:SF1">
    <property type="entry name" value="UDP-3-O-ACYL-N-ACETYLGLUCOSAMINE DEACETYLASE 1, MITOCHONDRIAL-RELATED"/>
    <property type="match status" value="1"/>
</dbReference>
<dbReference type="Pfam" id="PF03331">
    <property type="entry name" value="LpxC"/>
    <property type="match status" value="1"/>
</dbReference>
<dbReference type="SUPFAM" id="SSF54211">
    <property type="entry name" value="Ribosomal protein S5 domain 2-like"/>
    <property type="match status" value="2"/>
</dbReference>
<accession>B3PCL2</accession>
<proteinExistence type="inferred from homology"/>
<sequence>MLKQRTLKNPIRATGVGLHTGKPIQLTLLPAPADFGIVFRRVDLNPPVEIPANPYNVGETTLSTCLIKGDVRVSTVEHLMSAMAGLGVDNAVIELDSAEIPIMDGSAGPFVFLIQSAGVLEQDAPKKFLRVKKEVTLRDGDKYASFTPFDGFKVNFSIEFDHPVFRDRRPQTEVEFSTASFVKEVSRARTFGFMHEIEYLRSKGLAQGGSMANAIVVGEYRILNEDGLRFEDEFVKHKILDAIGDLYMLGHGLLADFRAHKSGHSLNNRALRLLLEQKDAWEWVTFEDEQPVPIDYLRPLAVA</sequence>
<comment type="function">
    <text evidence="1">Catalyzes the hydrolysis of UDP-3-O-myristoyl-N-acetylglucosamine to form UDP-3-O-myristoylglucosamine and acetate, the committed step in lipid A biosynthesis.</text>
</comment>
<comment type="catalytic activity">
    <reaction evidence="1">
        <text>a UDP-3-O-[(3R)-3-hydroxyacyl]-N-acetyl-alpha-D-glucosamine + H2O = a UDP-3-O-[(3R)-3-hydroxyacyl]-alpha-D-glucosamine + acetate</text>
        <dbReference type="Rhea" id="RHEA:67816"/>
        <dbReference type="ChEBI" id="CHEBI:15377"/>
        <dbReference type="ChEBI" id="CHEBI:30089"/>
        <dbReference type="ChEBI" id="CHEBI:137740"/>
        <dbReference type="ChEBI" id="CHEBI:173225"/>
        <dbReference type="EC" id="3.5.1.108"/>
    </reaction>
</comment>
<comment type="cofactor">
    <cofactor evidence="1">
        <name>Zn(2+)</name>
        <dbReference type="ChEBI" id="CHEBI:29105"/>
    </cofactor>
</comment>
<comment type="pathway">
    <text evidence="1">Glycolipid biosynthesis; lipid IV(A) biosynthesis; lipid IV(A) from (3R)-3-hydroxytetradecanoyl-[acyl-carrier-protein] and UDP-N-acetyl-alpha-D-glucosamine: step 2/6.</text>
</comment>
<comment type="similarity">
    <text evidence="1">Belongs to the LpxC family.</text>
</comment>
<keyword id="KW-0378">Hydrolase</keyword>
<keyword id="KW-0441">Lipid A biosynthesis</keyword>
<keyword id="KW-0444">Lipid biosynthesis</keyword>
<keyword id="KW-0443">Lipid metabolism</keyword>
<keyword id="KW-0479">Metal-binding</keyword>
<keyword id="KW-1185">Reference proteome</keyword>
<keyword id="KW-0862">Zinc</keyword>
<name>LPXC_CELJU</name>
<reference key="1">
    <citation type="journal article" date="2008" name="J. Bacteriol.">
        <title>Insights into plant cell wall degradation from the genome sequence of the soil bacterium Cellvibrio japonicus.</title>
        <authorList>
            <person name="DeBoy R.T."/>
            <person name="Mongodin E.F."/>
            <person name="Fouts D.E."/>
            <person name="Tailford L.E."/>
            <person name="Khouri H."/>
            <person name="Emerson J.B."/>
            <person name="Mohamoud Y."/>
            <person name="Watkins K."/>
            <person name="Henrissat B."/>
            <person name="Gilbert H.J."/>
            <person name="Nelson K.E."/>
        </authorList>
    </citation>
    <scope>NUCLEOTIDE SEQUENCE [LARGE SCALE GENOMIC DNA]</scope>
    <source>
        <strain>Ueda107</strain>
    </source>
</reference>
<feature type="chain" id="PRO_1000122771" description="UDP-3-O-acyl-N-acetylglucosamine deacetylase">
    <location>
        <begin position="1"/>
        <end position="303"/>
    </location>
</feature>
<feature type="active site" description="Proton donor" evidence="1">
    <location>
        <position position="264"/>
    </location>
</feature>
<feature type="binding site" evidence="1">
    <location>
        <position position="78"/>
    </location>
    <ligand>
        <name>Zn(2+)</name>
        <dbReference type="ChEBI" id="CHEBI:29105"/>
    </ligand>
</feature>
<feature type="binding site" evidence="1">
    <location>
        <position position="237"/>
    </location>
    <ligand>
        <name>Zn(2+)</name>
        <dbReference type="ChEBI" id="CHEBI:29105"/>
    </ligand>
</feature>
<feature type="binding site" evidence="1">
    <location>
        <position position="241"/>
    </location>
    <ligand>
        <name>Zn(2+)</name>
        <dbReference type="ChEBI" id="CHEBI:29105"/>
    </ligand>
</feature>